<organism>
    <name type="scientific">Bacillus cereus (strain 03BB102)</name>
    <dbReference type="NCBI Taxonomy" id="572264"/>
    <lineage>
        <taxon>Bacteria</taxon>
        <taxon>Bacillati</taxon>
        <taxon>Bacillota</taxon>
        <taxon>Bacilli</taxon>
        <taxon>Bacillales</taxon>
        <taxon>Bacillaceae</taxon>
        <taxon>Bacillus</taxon>
        <taxon>Bacillus cereus group</taxon>
    </lineage>
</organism>
<feature type="chain" id="PRO_1000134240" description="Homoserine kinase">
    <location>
        <begin position="1"/>
        <end position="297"/>
    </location>
</feature>
<feature type="binding site" evidence="1">
    <location>
        <begin position="82"/>
        <end position="92"/>
    </location>
    <ligand>
        <name>ATP</name>
        <dbReference type="ChEBI" id="CHEBI:30616"/>
    </ligand>
</feature>
<keyword id="KW-0028">Amino-acid biosynthesis</keyword>
<keyword id="KW-0067">ATP-binding</keyword>
<keyword id="KW-0963">Cytoplasm</keyword>
<keyword id="KW-0418">Kinase</keyword>
<keyword id="KW-0547">Nucleotide-binding</keyword>
<keyword id="KW-0791">Threonine biosynthesis</keyword>
<keyword id="KW-0808">Transferase</keyword>
<accession>C1ER94</accession>
<reference key="1">
    <citation type="submission" date="2009-02" db="EMBL/GenBank/DDBJ databases">
        <title>Genome sequence of Bacillus cereus 03BB102.</title>
        <authorList>
            <person name="Dodson R.J."/>
            <person name="Jackson P."/>
            <person name="Munk A.C."/>
            <person name="Brettin T."/>
            <person name="Bruce D."/>
            <person name="Detter C."/>
            <person name="Tapia R."/>
            <person name="Han C."/>
            <person name="Sutton G."/>
            <person name="Sims D."/>
        </authorList>
    </citation>
    <scope>NUCLEOTIDE SEQUENCE [LARGE SCALE GENOMIC DNA]</scope>
    <source>
        <strain>03BB102</strain>
    </source>
</reference>
<proteinExistence type="inferred from homology"/>
<sequence length="297" mass="32098">MIPLSIRVPASTANVGPGFDSVGIALSLYLHVVVKEKSDKWQVIHSFEDSIPTDDKNLIVSTACKVCPSLSPHIIEVTSNIPLTRGLGSSASAIVAGIELANQLGKLNLTTDQKVQIATNFEGHPDNVAASILGGTVIGALDGKNVSVVRIESKELGVISLIPNEELNTDESRSVLPDVFPFHEAVKASAISNVLVAALCQKKWEVVGEMMEMDHFHEPYRLELVPLLPSIRKCAKEFGAYGTALSGAGPSIFILTPYEKRQEIAEQLARVFTSMKVCELEIDHRGITVNKKEHIGL</sequence>
<dbReference type="EC" id="2.7.1.39" evidence="1"/>
<dbReference type="EMBL" id="CP001407">
    <property type="protein sequence ID" value="ACO26617.1"/>
    <property type="molecule type" value="Genomic_DNA"/>
</dbReference>
<dbReference type="RefSeq" id="WP_000612672.1">
    <property type="nucleotide sequence ID" value="NZ_CP009318.1"/>
</dbReference>
<dbReference type="SMR" id="C1ER94"/>
<dbReference type="KEGG" id="bcx:BCA_2032"/>
<dbReference type="PATRIC" id="fig|572264.18.peg.1978"/>
<dbReference type="UniPathway" id="UPA00050">
    <property type="reaction ID" value="UER00064"/>
</dbReference>
<dbReference type="Proteomes" id="UP000002210">
    <property type="component" value="Chromosome"/>
</dbReference>
<dbReference type="GO" id="GO:0005737">
    <property type="term" value="C:cytoplasm"/>
    <property type="evidence" value="ECO:0007669"/>
    <property type="project" value="UniProtKB-SubCell"/>
</dbReference>
<dbReference type="GO" id="GO:0005524">
    <property type="term" value="F:ATP binding"/>
    <property type="evidence" value="ECO:0007669"/>
    <property type="project" value="UniProtKB-UniRule"/>
</dbReference>
<dbReference type="GO" id="GO:0004413">
    <property type="term" value="F:homoserine kinase activity"/>
    <property type="evidence" value="ECO:0007669"/>
    <property type="project" value="UniProtKB-UniRule"/>
</dbReference>
<dbReference type="GO" id="GO:0009088">
    <property type="term" value="P:threonine biosynthetic process"/>
    <property type="evidence" value="ECO:0007669"/>
    <property type="project" value="UniProtKB-UniRule"/>
</dbReference>
<dbReference type="Gene3D" id="3.30.230.10">
    <property type="match status" value="1"/>
</dbReference>
<dbReference type="Gene3D" id="3.30.70.890">
    <property type="entry name" value="GHMP kinase, C-terminal domain"/>
    <property type="match status" value="1"/>
</dbReference>
<dbReference type="HAMAP" id="MF_00384">
    <property type="entry name" value="Homoser_kinase"/>
    <property type="match status" value="1"/>
</dbReference>
<dbReference type="InterPro" id="IPR013750">
    <property type="entry name" value="GHMP_kinase_C_dom"/>
</dbReference>
<dbReference type="InterPro" id="IPR036554">
    <property type="entry name" value="GHMP_kinase_C_sf"/>
</dbReference>
<dbReference type="InterPro" id="IPR006204">
    <property type="entry name" value="GHMP_kinase_N_dom"/>
</dbReference>
<dbReference type="InterPro" id="IPR006203">
    <property type="entry name" value="GHMP_knse_ATP-bd_CS"/>
</dbReference>
<dbReference type="InterPro" id="IPR000870">
    <property type="entry name" value="Homoserine_kinase"/>
</dbReference>
<dbReference type="InterPro" id="IPR020568">
    <property type="entry name" value="Ribosomal_Su5_D2-typ_SF"/>
</dbReference>
<dbReference type="InterPro" id="IPR014721">
    <property type="entry name" value="Ribsml_uS5_D2-typ_fold_subgr"/>
</dbReference>
<dbReference type="NCBIfam" id="TIGR00191">
    <property type="entry name" value="thrB"/>
    <property type="match status" value="1"/>
</dbReference>
<dbReference type="PANTHER" id="PTHR20861:SF1">
    <property type="entry name" value="HOMOSERINE KINASE"/>
    <property type="match status" value="1"/>
</dbReference>
<dbReference type="PANTHER" id="PTHR20861">
    <property type="entry name" value="HOMOSERINE/4-DIPHOSPHOCYTIDYL-2-C-METHYL-D-ERYTHRITOL KINASE"/>
    <property type="match status" value="1"/>
</dbReference>
<dbReference type="Pfam" id="PF08544">
    <property type="entry name" value="GHMP_kinases_C"/>
    <property type="match status" value="1"/>
</dbReference>
<dbReference type="Pfam" id="PF00288">
    <property type="entry name" value="GHMP_kinases_N"/>
    <property type="match status" value="1"/>
</dbReference>
<dbReference type="PIRSF" id="PIRSF000676">
    <property type="entry name" value="Homoser_kin"/>
    <property type="match status" value="1"/>
</dbReference>
<dbReference type="PRINTS" id="PR00958">
    <property type="entry name" value="HOMSERKINASE"/>
</dbReference>
<dbReference type="SUPFAM" id="SSF55060">
    <property type="entry name" value="GHMP Kinase, C-terminal domain"/>
    <property type="match status" value="1"/>
</dbReference>
<dbReference type="SUPFAM" id="SSF54211">
    <property type="entry name" value="Ribosomal protein S5 domain 2-like"/>
    <property type="match status" value="1"/>
</dbReference>
<dbReference type="PROSITE" id="PS00627">
    <property type="entry name" value="GHMP_KINASES_ATP"/>
    <property type="match status" value="1"/>
</dbReference>
<comment type="function">
    <text evidence="1">Catalyzes the ATP-dependent phosphorylation of L-homoserine to L-homoserine phosphate.</text>
</comment>
<comment type="catalytic activity">
    <reaction evidence="1">
        <text>L-homoserine + ATP = O-phospho-L-homoserine + ADP + H(+)</text>
        <dbReference type="Rhea" id="RHEA:13985"/>
        <dbReference type="ChEBI" id="CHEBI:15378"/>
        <dbReference type="ChEBI" id="CHEBI:30616"/>
        <dbReference type="ChEBI" id="CHEBI:57476"/>
        <dbReference type="ChEBI" id="CHEBI:57590"/>
        <dbReference type="ChEBI" id="CHEBI:456216"/>
        <dbReference type="EC" id="2.7.1.39"/>
    </reaction>
</comment>
<comment type="pathway">
    <text evidence="1">Amino-acid biosynthesis; L-threonine biosynthesis; L-threonine from L-aspartate: step 4/5.</text>
</comment>
<comment type="subcellular location">
    <subcellularLocation>
        <location evidence="1">Cytoplasm</location>
    </subcellularLocation>
</comment>
<comment type="similarity">
    <text evidence="1">Belongs to the GHMP kinase family. Homoserine kinase subfamily.</text>
</comment>
<name>KHSE_BACC3</name>
<gene>
    <name evidence="1" type="primary">thrB</name>
    <name type="ordered locus">BCA_2032</name>
</gene>
<protein>
    <recommendedName>
        <fullName evidence="1">Homoserine kinase</fullName>
        <shortName evidence="1">HK</shortName>
        <shortName evidence="1">HSK</shortName>
        <ecNumber evidence="1">2.7.1.39</ecNumber>
    </recommendedName>
</protein>
<evidence type="ECO:0000255" key="1">
    <source>
        <dbReference type="HAMAP-Rule" id="MF_00384"/>
    </source>
</evidence>